<reference key="1">
    <citation type="submission" date="2001-06" db="EMBL/GenBank/DDBJ databases">
        <title>Cloning and characterization of an Arabidopsis gene encoding an enzyme involved in ceramide formation.</title>
        <authorList>
            <person name="Morimoto Y."/>
            <person name="Nishiura H."/>
            <person name="Tamura K."/>
            <person name="Mori J."/>
            <person name="Imai H."/>
        </authorList>
    </citation>
    <scope>NUCLEOTIDE SEQUENCE [MRNA]</scope>
</reference>
<reference key="2">
    <citation type="journal article" date="1999" name="Nature">
        <title>Sequence and analysis of chromosome 4 of the plant Arabidopsis thaliana.</title>
        <authorList>
            <person name="Mayer K.F.X."/>
            <person name="Schueller C."/>
            <person name="Wambutt R."/>
            <person name="Murphy G."/>
            <person name="Volckaert G."/>
            <person name="Pohl T."/>
            <person name="Duesterhoeft A."/>
            <person name="Stiekema W."/>
            <person name="Entian K.-D."/>
            <person name="Terryn N."/>
            <person name="Harris B."/>
            <person name="Ansorge W."/>
            <person name="Brandt P."/>
            <person name="Grivell L.A."/>
            <person name="Rieger M."/>
            <person name="Weichselgartner M."/>
            <person name="de Simone V."/>
            <person name="Obermaier B."/>
            <person name="Mache R."/>
            <person name="Mueller M."/>
            <person name="Kreis M."/>
            <person name="Delseny M."/>
            <person name="Puigdomenech P."/>
            <person name="Watson M."/>
            <person name="Schmidtheini T."/>
            <person name="Reichert B."/>
            <person name="Portetelle D."/>
            <person name="Perez-Alonso M."/>
            <person name="Boutry M."/>
            <person name="Bancroft I."/>
            <person name="Vos P."/>
            <person name="Hoheisel J."/>
            <person name="Zimmermann W."/>
            <person name="Wedler H."/>
            <person name="Ridley P."/>
            <person name="Langham S.-A."/>
            <person name="McCullagh B."/>
            <person name="Bilham L."/>
            <person name="Robben J."/>
            <person name="van der Schueren J."/>
            <person name="Grymonprez B."/>
            <person name="Chuang Y.-J."/>
            <person name="Vandenbussche F."/>
            <person name="Braeken M."/>
            <person name="Weltjens I."/>
            <person name="Voet M."/>
            <person name="Bastiaens I."/>
            <person name="Aert R."/>
            <person name="Defoor E."/>
            <person name="Weitzenegger T."/>
            <person name="Bothe G."/>
            <person name="Ramsperger U."/>
            <person name="Hilbert H."/>
            <person name="Braun M."/>
            <person name="Holzer E."/>
            <person name="Brandt A."/>
            <person name="Peters S."/>
            <person name="van Staveren M."/>
            <person name="Dirkse W."/>
            <person name="Mooijman P."/>
            <person name="Klein Lankhorst R."/>
            <person name="Rose M."/>
            <person name="Hauf J."/>
            <person name="Koetter P."/>
            <person name="Berneiser S."/>
            <person name="Hempel S."/>
            <person name="Feldpausch M."/>
            <person name="Lamberth S."/>
            <person name="Van den Daele H."/>
            <person name="De Keyser A."/>
            <person name="Buysshaert C."/>
            <person name="Gielen J."/>
            <person name="Villarroel R."/>
            <person name="De Clercq R."/>
            <person name="van Montagu M."/>
            <person name="Rogers J."/>
            <person name="Cronin A."/>
            <person name="Quail M.A."/>
            <person name="Bray-Allen S."/>
            <person name="Clark L."/>
            <person name="Doggett J."/>
            <person name="Hall S."/>
            <person name="Kay M."/>
            <person name="Lennard N."/>
            <person name="McLay K."/>
            <person name="Mayes R."/>
            <person name="Pettett A."/>
            <person name="Rajandream M.A."/>
            <person name="Lyne M."/>
            <person name="Benes V."/>
            <person name="Rechmann S."/>
            <person name="Borkova D."/>
            <person name="Bloecker H."/>
            <person name="Scharfe M."/>
            <person name="Grimm M."/>
            <person name="Loehnert T.-H."/>
            <person name="Dose S."/>
            <person name="de Haan M."/>
            <person name="Maarse A.C."/>
            <person name="Schaefer M."/>
            <person name="Mueller-Auer S."/>
            <person name="Gabel C."/>
            <person name="Fuchs M."/>
            <person name="Fartmann B."/>
            <person name="Granderath K."/>
            <person name="Dauner D."/>
            <person name="Herzl A."/>
            <person name="Neumann S."/>
            <person name="Argiriou A."/>
            <person name="Vitale D."/>
            <person name="Liguori R."/>
            <person name="Piravandi E."/>
            <person name="Massenet O."/>
            <person name="Quigley F."/>
            <person name="Clabauld G."/>
            <person name="Muendlein A."/>
            <person name="Felber R."/>
            <person name="Schnabl S."/>
            <person name="Hiller R."/>
            <person name="Schmidt W."/>
            <person name="Lecharny A."/>
            <person name="Aubourg S."/>
            <person name="Chefdor F."/>
            <person name="Cooke R."/>
            <person name="Berger C."/>
            <person name="Monfort A."/>
            <person name="Casacuberta E."/>
            <person name="Gibbons T."/>
            <person name="Weber N."/>
            <person name="Vandenbol M."/>
            <person name="Bargues M."/>
            <person name="Terol J."/>
            <person name="Torres A."/>
            <person name="Perez-Perez A."/>
            <person name="Purnelle B."/>
            <person name="Bent E."/>
            <person name="Johnson S."/>
            <person name="Tacon D."/>
            <person name="Jesse T."/>
            <person name="Heijnen L."/>
            <person name="Schwarz S."/>
            <person name="Scholler P."/>
            <person name="Heber S."/>
            <person name="Francs P."/>
            <person name="Bielke C."/>
            <person name="Frishman D."/>
            <person name="Haase D."/>
            <person name="Lemcke K."/>
            <person name="Mewes H.-W."/>
            <person name="Stocker S."/>
            <person name="Zaccaria P."/>
            <person name="Bevan M."/>
            <person name="Wilson R.K."/>
            <person name="de la Bastide M."/>
            <person name="Habermann K."/>
            <person name="Parnell L."/>
            <person name="Dedhia N."/>
            <person name="Gnoj L."/>
            <person name="Schutz K."/>
            <person name="Huang E."/>
            <person name="Spiegel L."/>
            <person name="Sekhon M."/>
            <person name="Murray J."/>
            <person name="Sheet P."/>
            <person name="Cordes M."/>
            <person name="Abu-Threideh J."/>
            <person name="Stoneking T."/>
            <person name="Kalicki J."/>
            <person name="Graves T."/>
            <person name="Harmon G."/>
            <person name="Edwards J."/>
            <person name="Latreille P."/>
            <person name="Courtney L."/>
            <person name="Cloud J."/>
            <person name="Abbott A."/>
            <person name="Scott K."/>
            <person name="Johnson D."/>
            <person name="Minx P."/>
            <person name="Bentley D."/>
            <person name="Fulton B."/>
            <person name="Miller N."/>
            <person name="Greco T."/>
            <person name="Kemp K."/>
            <person name="Kramer J."/>
            <person name="Fulton L."/>
            <person name="Mardis E."/>
            <person name="Dante M."/>
            <person name="Pepin K."/>
            <person name="Hillier L.W."/>
            <person name="Nelson J."/>
            <person name="Spieth J."/>
            <person name="Ryan E."/>
            <person name="Andrews S."/>
            <person name="Geisel C."/>
            <person name="Layman D."/>
            <person name="Du H."/>
            <person name="Ali J."/>
            <person name="Berghoff A."/>
            <person name="Jones K."/>
            <person name="Drone K."/>
            <person name="Cotton M."/>
            <person name="Joshu C."/>
            <person name="Antonoiu B."/>
            <person name="Zidanic M."/>
            <person name="Strong C."/>
            <person name="Sun H."/>
            <person name="Lamar B."/>
            <person name="Yordan C."/>
            <person name="Ma P."/>
            <person name="Zhong J."/>
            <person name="Preston R."/>
            <person name="Vil D."/>
            <person name="Shekher M."/>
            <person name="Matero A."/>
            <person name="Shah R."/>
            <person name="Swaby I.K."/>
            <person name="O'Shaughnessy A."/>
            <person name="Rodriguez M."/>
            <person name="Hoffman J."/>
            <person name="Till S."/>
            <person name="Granat S."/>
            <person name="Shohdy N."/>
            <person name="Hasegawa A."/>
            <person name="Hameed A."/>
            <person name="Lodhi M."/>
            <person name="Johnson A."/>
            <person name="Chen E."/>
            <person name="Marra M.A."/>
            <person name="Martienssen R."/>
            <person name="McCombie W.R."/>
        </authorList>
    </citation>
    <scope>NUCLEOTIDE SEQUENCE [LARGE SCALE GENOMIC DNA]</scope>
    <source>
        <strain>cv. Columbia</strain>
    </source>
</reference>
<reference key="3">
    <citation type="journal article" date="2017" name="Plant J.">
        <title>Araport11: a complete reannotation of the Arabidopsis thaliana reference genome.</title>
        <authorList>
            <person name="Cheng C.Y."/>
            <person name="Krishnakumar V."/>
            <person name="Chan A.P."/>
            <person name="Thibaud-Nissen F."/>
            <person name="Schobel S."/>
            <person name="Town C.D."/>
        </authorList>
    </citation>
    <scope>GENOME REANNOTATION</scope>
    <source>
        <strain>cv. Columbia</strain>
    </source>
</reference>
<reference key="4">
    <citation type="journal article" date="2003" name="Science">
        <title>Empirical analysis of transcriptional activity in the Arabidopsis genome.</title>
        <authorList>
            <person name="Yamada K."/>
            <person name="Lim J."/>
            <person name="Dale J.M."/>
            <person name="Chen H."/>
            <person name="Shinn P."/>
            <person name="Palm C.J."/>
            <person name="Southwick A.M."/>
            <person name="Wu H.C."/>
            <person name="Kim C.J."/>
            <person name="Nguyen M."/>
            <person name="Pham P.K."/>
            <person name="Cheuk R.F."/>
            <person name="Karlin-Newmann G."/>
            <person name="Liu S.X."/>
            <person name="Lam B."/>
            <person name="Sakano H."/>
            <person name="Wu T."/>
            <person name="Yu G."/>
            <person name="Miranda M."/>
            <person name="Quach H.L."/>
            <person name="Tripp M."/>
            <person name="Chang C.H."/>
            <person name="Lee J.M."/>
            <person name="Toriumi M.J."/>
            <person name="Chan M.M."/>
            <person name="Tang C.C."/>
            <person name="Onodera C.S."/>
            <person name="Deng J.M."/>
            <person name="Akiyama K."/>
            <person name="Ansari Y."/>
            <person name="Arakawa T."/>
            <person name="Banh J."/>
            <person name="Banno F."/>
            <person name="Bowser L."/>
            <person name="Brooks S.Y."/>
            <person name="Carninci P."/>
            <person name="Chao Q."/>
            <person name="Choy N."/>
            <person name="Enju A."/>
            <person name="Goldsmith A.D."/>
            <person name="Gurjal M."/>
            <person name="Hansen N.F."/>
            <person name="Hayashizaki Y."/>
            <person name="Johnson-Hopson C."/>
            <person name="Hsuan V.W."/>
            <person name="Iida K."/>
            <person name="Karnes M."/>
            <person name="Khan S."/>
            <person name="Koesema E."/>
            <person name="Ishida J."/>
            <person name="Jiang P.X."/>
            <person name="Jones T."/>
            <person name="Kawai J."/>
            <person name="Kamiya A."/>
            <person name="Meyers C."/>
            <person name="Nakajima M."/>
            <person name="Narusaka M."/>
            <person name="Seki M."/>
            <person name="Sakurai T."/>
            <person name="Satou M."/>
            <person name="Tamse R."/>
            <person name="Vaysberg M."/>
            <person name="Wallender E.K."/>
            <person name="Wong C."/>
            <person name="Yamamura Y."/>
            <person name="Yuan S."/>
            <person name="Shinozaki K."/>
            <person name="Davis R.W."/>
            <person name="Theologis A."/>
            <person name="Ecker J.R."/>
        </authorList>
    </citation>
    <scope>NUCLEOTIDE SEQUENCE [LARGE SCALE MRNA]</scope>
    <source>
        <strain>cv. Columbia</strain>
    </source>
</reference>
<reference key="5">
    <citation type="journal article" date="2008" name="Plant J.">
        <title>Systematic analysis of protein subcellular localization and interaction using high-throughput transient transformation of Arabidopsis seedlings.</title>
        <authorList>
            <person name="Marion J."/>
            <person name="Bach L."/>
            <person name="Bellec Y."/>
            <person name="Meyer C."/>
            <person name="Gissot L."/>
            <person name="Faure J.D."/>
        </authorList>
    </citation>
    <scope>SUBCELLULAR LOCATION</scope>
</reference>
<reference key="6">
    <citation type="journal article" date="2013" name="Arabidopsis Book">
        <title>Acyl-lipid metabolism.</title>
        <authorList>
            <person name="Li-Beisson Y."/>
            <person name="Shorrosh B."/>
            <person name="Beisson F."/>
            <person name="Andersson M.X."/>
            <person name="Arondel V."/>
            <person name="Bates P.D."/>
            <person name="Baud S."/>
            <person name="Bird D."/>
            <person name="Debono A."/>
            <person name="Durrett T.P."/>
            <person name="Franke R.B."/>
            <person name="Graham I.A."/>
            <person name="Katayama K."/>
            <person name="Kelly A.A."/>
            <person name="Larson T."/>
            <person name="Markham J.E."/>
            <person name="Miquel M."/>
            <person name="Molina I."/>
            <person name="Nishida I."/>
            <person name="Rowland O."/>
            <person name="Samuels L."/>
            <person name="Schmid K.M."/>
            <person name="Wada H."/>
            <person name="Welti R."/>
            <person name="Xu C."/>
            <person name="Zallot R."/>
            <person name="Ohlrogge J."/>
        </authorList>
    </citation>
    <scope>REVIEW</scope>
</reference>
<reference key="7">
    <citation type="journal article" date="2015" name="Plant J.">
        <title>The Arabidopsis ceramidase AtACER functions in disease resistance and salt tolerance.</title>
        <authorList>
            <person name="Wu J.-X."/>
            <person name="Li J."/>
            <person name="Liu Z."/>
            <person name="Yin J."/>
            <person name="Chang Z.-Y."/>
            <person name="Rong C."/>
            <person name="Wu J.-L."/>
            <person name="Bi F.-C."/>
            <person name="Yao N."/>
        </authorList>
    </citation>
    <scope>FUNCTION</scope>
    <scope>DISRUPTION PHENOTYPE</scope>
    <scope>SUBCELLULAR LOCATION</scope>
    <scope>TISSUE SPECIFICITY</scope>
    <source>
        <strain>cv. Columbia</strain>
    </source>
</reference>
<gene>
    <name evidence="7" type="primary">ACER</name>
    <name evidence="6" type="synonym">CES1</name>
    <name evidence="5" type="synonym">YPC1</name>
    <name evidence="9" type="ordered locus">At4g22330</name>
    <name evidence="10" type="ORF">T10I14.160</name>
</gene>
<proteinExistence type="evidence at transcript level"/>
<evidence type="ECO:0000250" key="1">
    <source>
        <dbReference type="UniProtKB" id="Q9NUN7"/>
    </source>
</evidence>
<evidence type="ECO:0000255" key="2"/>
<evidence type="ECO:0000269" key="3">
    <source>
    </source>
</evidence>
<evidence type="ECO:0000269" key="4">
    <source>
    </source>
</evidence>
<evidence type="ECO:0000303" key="5">
    <source>
    </source>
</evidence>
<evidence type="ECO:0000303" key="6">
    <source>
    </source>
</evidence>
<evidence type="ECO:0000303" key="7">
    <source>
    </source>
</evidence>
<evidence type="ECO:0000305" key="8"/>
<evidence type="ECO:0000312" key="9">
    <source>
        <dbReference type="Araport" id="AT4G22330"/>
    </source>
</evidence>
<evidence type="ECO:0000312" key="10">
    <source>
        <dbReference type="EMBL" id="CAA16783.1"/>
    </source>
</evidence>
<accession>Q94IB9</accession>
<accession>O49638</accession>
<comment type="function">
    <text evidence="1 4">Hydrolyzes only phytoceramide into phytosphingosine and free fatty acid (PubMed:25619405). Does not have reverse activity (By similarity). Affects plant morphogenesis. Required for the formation of wax layer that ensure cuticle permeability. Implicated in abscisic acid (ABA)-mediated stomatal closure. Involved in both biotic and abiotic stresses. Promotes salt resistance and defenses responses toward pathogenic bacteria (e.g. P.syringae) and against the fungal toxin fumonisin B1 (FB1) (PubMed:25619405).</text>
</comment>
<comment type="cofactor">
    <cofactor evidence="1">
        <name>Zn(2+)</name>
        <dbReference type="ChEBI" id="CHEBI:29105"/>
    </cofactor>
</comment>
<comment type="subcellular location">
    <subcellularLocation>
        <location evidence="3 4">Endoplasmic reticulum membrane</location>
        <topology evidence="2">Multi-pass membrane protein</topology>
    </subcellularLocation>
    <subcellularLocation>
        <location evidence="4">Golgi apparatus membrane</location>
        <topology evidence="2">Multi-pass membrane protein</topology>
    </subcellularLocation>
</comment>
<comment type="tissue specificity">
    <text evidence="4">Mostly expressed in roots, shoot meristems and pollen, and, to a lower extent, in mature leaves.</text>
</comment>
<comment type="disruption phenotype">
    <text evidence="4">Pleiotropic phenotypes, including reduction of leaf size, dwarfing, small flowers and an irregular wax layer. The abnormal wax layer is associated with higher water loss and rapid chlorophyll leaching due to an increased cuticle permeability. Increased phytoceramides levels and decreased long chain bases. Increased sensitivity to salt stress. Increased susceptibility to the pathogenic bacteria P.syringae with reduced pathogenesis-related (PR) genes induction. Reduced sensitivity to abscisic acid (ABA) leading to impaired stomatal closure regulation. Increased sensitivity to the fungal toxin fumonisin B1 (FB1)-induced cell death.</text>
</comment>
<comment type="similarity">
    <text evidence="8">Belongs to the alkaline ceramidase family.</text>
</comment>
<comment type="sequence caution" evidence="8">
    <conflict type="erroneous gene model prediction">
        <sequence resource="EMBL-CDS" id="CAA16783"/>
    </conflict>
</comment>
<comment type="sequence caution" evidence="8">
    <conflict type="erroneous gene model prediction">
        <sequence resource="EMBL-CDS" id="CAB79188"/>
    </conflict>
</comment>
<protein>
    <recommendedName>
        <fullName evidence="7">Alkaline ceramidase</fullName>
        <shortName evidence="7">AlkCDase</shortName>
        <shortName evidence="7">Alkaline CDase</shortName>
        <shortName evidence="7">AtACER</shortName>
        <ecNumber evidence="8">3.5.1.-</ecNumber>
    </recommendedName>
    <alternativeName>
        <fullName evidence="6">Acyl-CoA independent ceramide synthase 1</fullName>
        <shortName evidence="6">AtCES1</shortName>
    </alternativeName>
    <alternativeName>
        <fullName evidence="5">Alkaline ceramidase YPC1</fullName>
        <shortName evidence="5">AtYPC1</shortName>
    </alternativeName>
    <alternativeName>
        <fullName evidence="8">Alkaline dihydroceramidase ACER</fullName>
    </alternativeName>
    <alternativeName>
        <fullName evidence="8">Alkaline phytoceramidase</fullName>
        <shortName evidence="8">aPHC</shortName>
    </alternativeName>
</protein>
<feature type="chain" id="PRO_0000439758" description="Alkaline ceramidase">
    <location>
        <begin position="1"/>
        <end position="255"/>
    </location>
</feature>
<feature type="topological domain" description="Lumenal" evidence="2">
    <location>
        <begin position="1"/>
        <end position="28"/>
    </location>
</feature>
<feature type="transmembrane region" description="Helical" evidence="2">
    <location>
        <begin position="29"/>
        <end position="49"/>
    </location>
</feature>
<feature type="topological domain" description="Cytoplasmic" evidence="2">
    <location>
        <begin position="50"/>
        <end position="60"/>
    </location>
</feature>
<feature type="transmembrane region" description="Helical" evidence="2">
    <location>
        <begin position="61"/>
        <end position="81"/>
    </location>
</feature>
<feature type="topological domain" description="Lumenal" evidence="2">
    <location>
        <begin position="82"/>
        <end position="91"/>
    </location>
</feature>
<feature type="transmembrane region" description="Helical" evidence="2">
    <location>
        <begin position="92"/>
        <end position="112"/>
    </location>
</feature>
<feature type="topological domain" description="Cytoplasmic" evidence="2">
    <location>
        <begin position="113"/>
        <end position="118"/>
    </location>
</feature>
<feature type="transmembrane region" description="Helical" evidence="2">
    <location>
        <begin position="119"/>
        <end position="139"/>
    </location>
</feature>
<feature type="transmembrane region" description="Helical" evidence="2">
    <location>
        <begin position="140"/>
        <end position="160"/>
    </location>
</feature>
<feature type="topological domain" description="Cytoplasmic" evidence="2">
    <location>
        <begin position="161"/>
        <end position="169"/>
    </location>
</feature>
<feature type="transmembrane region" description="Helical" evidence="2">
    <location>
        <begin position="170"/>
        <end position="192"/>
    </location>
</feature>
<feature type="topological domain" description="Lumenal" evidence="2">
    <location>
        <begin position="193"/>
        <end position="205"/>
    </location>
</feature>
<feature type="transmembrane region" description="Helical" evidence="2">
    <location>
        <begin position="206"/>
        <end position="226"/>
    </location>
</feature>
<feature type="topological domain" description="Cytoplasmic" evidence="2">
    <location>
        <begin position="227"/>
        <end position="255"/>
    </location>
</feature>
<feature type="binding site" evidence="1">
    <location>
        <position position="79"/>
    </location>
    <ligand>
        <name>Zn(2+)</name>
        <dbReference type="ChEBI" id="CHEBI:29105"/>
        <note>catalytic</note>
    </ligand>
</feature>
<feature type="binding site" evidence="1">
    <location>
        <position position="205"/>
    </location>
    <ligand>
        <name>Zn(2+)</name>
        <dbReference type="ChEBI" id="CHEBI:29105"/>
        <note>catalytic</note>
    </ligand>
</feature>
<feature type="binding site" evidence="1">
    <location>
        <position position="209"/>
    </location>
    <ligand>
        <name>Zn(2+)</name>
        <dbReference type="ChEBI" id="CHEBI:29105"/>
        <note>catalytic</note>
    </ligand>
</feature>
<dbReference type="EC" id="3.5.1.-" evidence="8"/>
<dbReference type="EMBL" id="AB063253">
    <property type="protein sequence ID" value="BAB60897.1"/>
    <property type="molecule type" value="mRNA"/>
</dbReference>
<dbReference type="EMBL" id="AL021712">
    <property type="protein sequence ID" value="CAA16783.1"/>
    <property type="status" value="ALT_SEQ"/>
    <property type="molecule type" value="Genomic_DNA"/>
</dbReference>
<dbReference type="EMBL" id="AL161557">
    <property type="protein sequence ID" value="CAB79188.1"/>
    <property type="status" value="ALT_SEQ"/>
    <property type="molecule type" value="Genomic_DNA"/>
</dbReference>
<dbReference type="EMBL" id="CP002687">
    <property type="protein sequence ID" value="AEE84594.1"/>
    <property type="molecule type" value="Genomic_DNA"/>
</dbReference>
<dbReference type="EMBL" id="BT008549">
    <property type="protein sequence ID" value="AAP40376.1"/>
    <property type="molecule type" value="mRNA"/>
</dbReference>
<dbReference type="EMBL" id="BT008652">
    <property type="protein sequence ID" value="AAP40465.1"/>
    <property type="molecule type" value="mRNA"/>
</dbReference>
<dbReference type="PIR" id="T04914">
    <property type="entry name" value="T04914"/>
</dbReference>
<dbReference type="RefSeq" id="NP_567660.1">
    <property type="nucleotide sequence ID" value="NM_118359.4"/>
</dbReference>
<dbReference type="SMR" id="Q94IB9"/>
<dbReference type="FunCoup" id="Q94IB9">
    <property type="interactions" value="2796"/>
</dbReference>
<dbReference type="STRING" id="3702.Q94IB9"/>
<dbReference type="PaxDb" id="3702-AT4G22330.1"/>
<dbReference type="ProteomicsDB" id="244523"/>
<dbReference type="EnsemblPlants" id="AT4G22330.1">
    <property type="protein sequence ID" value="AT4G22330.1"/>
    <property type="gene ID" value="AT4G22330"/>
</dbReference>
<dbReference type="GeneID" id="828328"/>
<dbReference type="Gramene" id="AT4G22330.1">
    <property type="protein sequence ID" value="AT4G22330.1"/>
    <property type="gene ID" value="AT4G22330"/>
</dbReference>
<dbReference type="KEGG" id="ath:AT4G22330"/>
<dbReference type="Araport" id="AT4G22330"/>
<dbReference type="TAIR" id="AT4G22330">
    <property type="gene designation" value="ATCES1"/>
</dbReference>
<dbReference type="eggNOG" id="KOG2329">
    <property type="taxonomic scope" value="Eukaryota"/>
</dbReference>
<dbReference type="HOGENOM" id="CLU_063293_3_1_1"/>
<dbReference type="InParanoid" id="Q94IB9"/>
<dbReference type="OMA" id="IMFEPLR"/>
<dbReference type="OrthoDB" id="187171at2759"/>
<dbReference type="PhylomeDB" id="Q94IB9"/>
<dbReference type="BRENDA" id="3.5.1.23">
    <property type="organism ID" value="399"/>
</dbReference>
<dbReference type="PRO" id="PR:Q94IB9"/>
<dbReference type="Proteomes" id="UP000006548">
    <property type="component" value="Chromosome 4"/>
</dbReference>
<dbReference type="ExpressionAtlas" id="Q94IB9">
    <property type="expression patterns" value="baseline and differential"/>
</dbReference>
<dbReference type="GO" id="GO:0005783">
    <property type="term" value="C:endoplasmic reticulum"/>
    <property type="evidence" value="ECO:0000314"/>
    <property type="project" value="TAIR"/>
</dbReference>
<dbReference type="GO" id="GO:0005789">
    <property type="term" value="C:endoplasmic reticulum membrane"/>
    <property type="evidence" value="ECO:0007669"/>
    <property type="project" value="UniProtKB-SubCell"/>
</dbReference>
<dbReference type="GO" id="GO:0005794">
    <property type="term" value="C:Golgi apparatus"/>
    <property type="evidence" value="ECO:0000314"/>
    <property type="project" value="UniProtKB"/>
</dbReference>
<dbReference type="GO" id="GO:0000139">
    <property type="term" value="C:Golgi membrane"/>
    <property type="evidence" value="ECO:0007669"/>
    <property type="project" value="UniProtKB-SubCell"/>
</dbReference>
<dbReference type="GO" id="GO:0005634">
    <property type="term" value="C:nucleus"/>
    <property type="evidence" value="ECO:0000314"/>
    <property type="project" value="TAIR"/>
</dbReference>
<dbReference type="GO" id="GO:0016811">
    <property type="term" value="F:hydrolase activity, acting on carbon-nitrogen (but not peptide) bonds, in linear amides"/>
    <property type="evidence" value="ECO:0007669"/>
    <property type="project" value="InterPro"/>
</dbReference>
<dbReference type="GO" id="GO:0046872">
    <property type="term" value="F:metal ion binding"/>
    <property type="evidence" value="ECO:0007669"/>
    <property type="project" value="UniProtKB-KW"/>
</dbReference>
<dbReference type="GO" id="GO:0009738">
    <property type="term" value="P:abscisic acid-activated signaling pathway"/>
    <property type="evidence" value="ECO:0007669"/>
    <property type="project" value="UniProtKB-KW"/>
</dbReference>
<dbReference type="GO" id="GO:0006914">
    <property type="term" value="P:autophagy"/>
    <property type="evidence" value="ECO:0000314"/>
    <property type="project" value="TAIR"/>
</dbReference>
<dbReference type="GO" id="GO:0006672">
    <property type="term" value="P:ceramide metabolic process"/>
    <property type="evidence" value="ECO:0007669"/>
    <property type="project" value="InterPro"/>
</dbReference>
<dbReference type="GO" id="GO:0042742">
    <property type="term" value="P:defense response to bacterium"/>
    <property type="evidence" value="ECO:0000315"/>
    <property type="project" value="UniProtKB"/>
</dbReference>
<dbReference type="GO" id="GO:0098542">
    <property type="term" value="P:defense response to other organism"/>
    <property type="evidence" value="ECO:0000315"/>
    <property type="project" value="TAIR"/>
</dbReference>
<dbReference type="GO" id="GO:0010150">
    <property type="term" value="P:leaf senescence"/>
    <property type="evidence" value="ECO:0000315"/>
    <property type="project" value="TAIR"/>
</dbReference>
<dbReference type="GO" id="GO:0010508">
    <property type="term" value="P:positive regulation of autophagy"/>
    <property type="evidence" value="ECO:0000315"/>
    <property type="project" value="TAIR"/>
</dbReference>
<dbReference type="GO" id="GO:0090333">
    <property type="term" value="P:regulation of stomatal closure"/>
    <property type="evidence" value="ECO:0000315"/>
    <property type="project" value="UniProtKB"/>
</dbReference>
<dbReference type="GO" id="GO:0009737">
    <property type="term" value="P:response to abscisic acid"/>
    <property type="evidence" value="ECO:0000315"/>
    <property type="project" value="UniProtKB"/>
</dbReference>
<dbReference type="GO" id="GO:0002238">
    <property type="term" value="P:response to molecule of fungal origin"/>
    <property type="evidence" value="ECO:0000315"/>
    <property type="project" value="UniProtKB"/>
</dbReference>
<dbReference type="GO" id="GO:0031667">
    <property type="term" value="P:response to nutrient levels"/>
    <property type="evidence" value="ECO:0000315"/>
    <property type="project" value="TAIR"/>
</dbReference>
<dbReference type="GO" id="GO:0009651">
    <property type="term" value="P:response to salt stress"/>
    <property type="evidence" value="ECO:0000315"/>
    <property type="project" value="TAIR"/>
</dbReference>
<dbReference type="GO" id="GO:0030148">
    <property type="term" value="P:sphingolipid biosynthetic process"/>
    <property type="evidence" value="ECO:0000315"/>
    <property type="project" value="TAIR"/>
</dbReference>
<dbReference type="GO" id="GO:0010025">
    <property type="term" value="P:wax biosynthetic process"/>
    <property type="evidence" value="ECO:0000315"/>
    <property type="project" value="UniProtKB"/>
</dbReference>
<dbReference type="InterPro" id="IPR008901">
    <property type="entry name" value="ACER"/>
</dbReference>
<dbReference type="InterPro" id="IPR044219">
    <property type="entry name" value="ACER_plant"/>
</dbReference>
<dbReference type="PANTHER" id="PTHR46852">
    <property type="entry name" value="ALKALINE CERAMIDASE"/>
    <property type="match status" value="1"/>
</dbReference>
<dbReference type="PANTHER" id="PTHR46852:SF5">
    <property type="entry name" value="ALKALINE CERAMIDASE"/>
    <property type="match status" value="1"/>
</dbReference>
<dbReference type="Pfam" id="PF05875">
    <property type="entry name" value="Ceramidase"/>
    <property type="match status" value="1"/>
</dbReference>
<sequence length="255" mass="29744">MADGISSFWGPVTSTIECCEMNYAYSSYIAEFYNTISNVPGILLALIGLVNALRQRFEKRFSILHISNMILAIGSMLYHATLQHVQQQSDETPMVWEILLYMYILYSPDWHYRSTMPTFLFLYGAAFAIVHAYLRFGIGFKVHYVILCLLCIPRMYKYYIHTEDTAAKRIAKWYVATILVGSICWFCDRVFCKTISQWPVNPQGHALWHVFMSFNSYCANTFLMFCRAQQRGWNPKVKYFLGVLPYVKIEKPKTQ</sequence>
<keyword id="KW-0938">Abscisic acid signaling pathway</keyword>
<keyword id="KW-0217">Developmental protein</keyword>
<keyword id="KW-0256">Endoplasmic reticulum</keyword>
<keyword id="KW-0333">Golgi apparatus</keyword>
<keyword id="KW-0378">Hydrolase</keyword>
<keyword id="KW-0472">Membrane</keyword>
<keyword id="KW-0479">Metal-binding</keyword>
<keyword id="KW-0611">Plant defense</keyword>
<keyword id="KW-1185">Reference proteome</keyword>
<keyword id="KW-0346">Stress response</keyword>
<keyword id="KW-0812">Transmembrane</keyword>
<keyword id="KW-1133">Transmembrane helix</keyword>
<keyword id="KW-0862">Zinc</keyword>
<name>ACER_ARATH</name>
<organism>
    <name type="scientific">Arabidopsis thaliana</name>
    <name type="common">Mouse-ear cress</name>
    <dbReference type="NCBI Taxonomy" id="3702"/>
    <lineage>
        <taxon>Eukaryota</taxon>
        <taxon>Viridiplantae</taxon>
        <taxon>Streptophyta</taxon>
        <taxon>Embryophyta</taxon>
        <taxon>Tracheophyta</taxon>
        <taxon>Spermatophyta</taxon>
        <taxon>Magnoliopsida</taxon>
        <taxon>eudicotyledons</taxon>
        <taxon>Gunneridae</taxon>
        <taxon>Pentapetalae</taxon>
        <taxon>rosids</taxon>
        <taxon>malvids</taxon>
        <taxon>Brassicales</taxon>
        <taxon>Brassicaceae</taxon>
        <taxon>Camelineae</taxon>
        <taxon>Arabidopsis</taxon>
    </lineage>
</organism>